<proteinExistence type="evidence at protein level"/>
<sequence length="341" mass="38086">MVGRVQPDRKQLPLVLLRLLCLLPTGLPVRSVDFNRGTDNITVRQGDTAILRCVVEDKNSKVAWLNRSGIIFAGHDKWSLDPRVELEKRHALEYSLRIQKVDVYDEGSYTCSVQTQHEPKTSQVYLIVQVPPKISNISSDVTVNEGSNVTLVCMANGRPEPVITWRHLTPLGREFEGEEEYLEILGITREQSGKYECKAANEVSSADVKQVKVTVNYPPTITESKSNEATTGRQASLKCEASAVPAPDFEWYRDDTRINSANGLEIKSTEGQSSLTVTNVTEEHYGNYTCVAANKLGVTNASLVLFSKYAKTEPDSMQVIEFLHIDLKSIRHPLKVNPIQK</sequence>
<comment type="function">
    <text evidence="1">Mediates selective neuronal growth and axon targeting. Contributes to the guidance of developing axons and remodeling of mature circuits in the limbic system. Essential for normal growth of the hippocampal mossy fiber projection (By similarity).</text>
</comment>
<comment type="subcellular location">
    <subcellularLocation>
        <location evidence="1">Cell membrane</location>
        <topology evidence="1">Lipid-anchor</topology>
        <topology evidence="1">GPI-anchor</topology>
    </subcellularLocation>
</comment>
<comment type="similarity">
    <text evidence="4">Belongs to the immunoglobulin superfamily. IgLON family.</text>
</comment>
<accession>Q8BLK3</accession>
<feature type="signal peptide" evidence="1">
    <location>
        <begin position="1"/>
        <end position="28"/>
    </location>
</feature>
<feature type="chain" id="PRO_0000015104" description="Limbic system-associated membrane protein">
    <location>
        <begin position="29"/>
        <end status="unknown"/>
    </location>
</feature>
<feature type="propeptide" id="PRO_0000015105" description="Removed in mature form" evidence="2">
    <location>
        <begin status="unknown"/>
        <end position="341"/>
    </location>
</feature>
<feature type="domain" description="Ig-like 1">
    <location>
        <begin position="29"/>
        <end position="122"/>
    </location>
</feature>
<feature type="domain" description="Ig-like 2">
    <location>
        <begin position="132"/>
        <end position="214"/>
    </location>
</feature>
<feature type="domain" description="Ig-like 3">
    <location>
        <begin position="219"/>
        <end position="304"/>
    </location>
</feature>
<feature type="modified residue" description="Phosphotyrosine" evidence="5">
    <location>
        <position position="94"/>
    </location>
</feature>
<feature type="glycosylation site" description="N-linked (GlcNAc...) asparagine" evidence="2">
    <location>
        <position position="40"/>
    </location>
</feature>
<feature type="glycosylation site" description="N-linked (GlcNAc...) asparagine" evidence="2">
    <location>
        <position position="66"/>
    </location>
</feature>
<feature type="glycosylation site" description="N-linked (GlcNAc...) asparagine" evidence="2">
    <location>
        <position position="136"/>
    </location>
</feature>
<feature type="glycosylation site" description="N-linked (GlcNAc...) asparagine" evidence="2">
    <location>
        <position position="148"/>
    </location>
</feature>
<feature type="glycosylation site" description="N-linked (GlcNAc...) asparagine" evidence="2">
    <location>
        <position position="279"/>
    </location>
</feature>
<feature type="glycosylation site" description="N-linked (GlcNAc...) asparagine" evidence="2">
    <location>
        <position position="287"/>
    </location>
</feature>
<feature type="glycosylation site" description="N-linked (GlcNAc...) asparagine" evidence="2">
    <location>
        <position position="300"/>
    </location>
</feature>
<feature type="disulfide bond" evidence="3">
    <location>
        <begin position="53"/>
        <end position="111"/>
    </location>
</feature>
<feature type="disulfide bond" evidence="3">
    <location>
        <begin position="153"/>
        <end position="197"/>
    </location>
</feature>
<feature type="disulfide bond" evidence="3">
    <location>
        <begin position="239"/>
        <end position="290"/>
    </location>
</feature>
<reference key="1">
    <citation type="journal article" date="2005" name="Science">
        <title>The transcriptional landscape of the mammalian genome.</title>
        <authorList>
            <person name="Carninci P."/>
            <person name="Kasukawa T."/>
            <person name="Katayama S."/>
            <person name="Gough J."/>
            <person name="Frith M.C."/>
            <person name="Maeda N."/>
            <person name="Oyama R."/>
            <person name="Ravasi T."/>
            <person name="Lenhard B."/>
            <person name="Wells C."/>
            <person name="Kodzius R."/>
            <person name="Shimokawa K."/>
            <person name="Bajic V.B."/>
            <person name="Brenner S.E."/>
            <person name="Batalov S."/>
            <person name="Forrest A.R."/>
            <person name="Zavolan M."/>
            <person name="Davis M.J."/>
            <person name="Wilming L.G."/>
            <person name="Aidinis V."/>
            <person name="Allen J.E."/>
            <person name="Ambesi-Impiombato A."/>
            <person name="Apweiler R."/>
            <person name="Aturaliya R.N."/>
            <person name="Bailey T.L."/>
            <person name="Bansal M."/>
            <person name="Baxter L."/>
            <person name="Beisel K.W."/>
            <person name="Bersano T."/>
            <person name="Bono H."/>
            <person name="Chalk A.M."/>
            <person name="Chiu K.P."/>
            <person name="Choudhary V."/>
            <person name="Christoffels A."/>
            <person name="Clutterbuck D.R."/>
            <person name="Crowe M.L."/>
            <person name="Dalla E."/>
            <person name="Dalrymple B.P."/>
            <person name="de Bono B."/>
            <person name="Della Gatta G."/>
            <person name="di Bernardo D."/>
            <person name="Down T."/>
            <person name="Engstrom P."/>
            <person name="Fagiolini M."/>
            <person name="Faulkner G."/>
            <person name="Fletcher C.F."/>
            <person name="Fukushima T."/>
            <person name="Furuno M."/>
            <person name="Futaki S."/>
            <person name="Gariboldi M."/>
            <person name="Georgii-Hemming P."/>
            <person name="Gingeras T.R."/>
            <person name="Gojobori T."/>
            <person name="Green R.E."/>
            <person name="Gustincich S."/>
            <person name="Harbers M."/>
            <person name="Hayashi Y."/>
            <person name="Hensch T.K."/>
            <person name="Hirokawa N."/>
            <person name="Hill D."/>
            <person name="Huminiecki L."/>
            <person name="Iacono M."/>
            <person name="Ikeo K."/>
            <person name="Iwama A."/>
            <person name="Ishikawa T."/>
            <person name="Jakt M."/>
            <person name="Kanapin A."/>
            <person name="Katoh M."/>
            <person name="Kawasawa Y."/>
            <person name="Kelso J."/>
            <person name="Kitamura H."/>
            <person name="Kitano H."/>
            <person name="Kollias G."/>
            <person name="Krishnan S.P."/>
            <person name="Kruger A."/>
            <person name="Kummerfeld S.K."/>
            <person name="Kurochkin I.V."/>
            <person name="Lareau L.F."/>
            <person name="Lazarevic D."/>
            <person name="Lipovich L."/>
            <person name="Liu J."/>
            <person name="Liuni S."/>
            <person name="McWilliam S."/>
            <person name="Madan Babu M."/>
            <person name="Madera M."/>
            <person name="Marchionni L."/>
            <person name="Matsuda H."/>
            <person name="Matsuzawa S."/>
            <person name="Miki H."/>
            <person name="Mignone F."/>
            <person name="Miyake S."/>
            <person name="Morris K."/>
            <person name="Mottagui-Tabar S."/>
            <person name="Mulder N."/>
            <person name="Nakano N."/>
            <person name="Nakauchi H."/>
            <person name="Ng P."/>
            <person name="Nilsson R."/>
            <person name="Nishiguchi S."/>
            <person name="Nishikawa S."/>
            <person name="Nori F."/>
            <person name="Ohara O."/>
            <person name="Okazaki Y."/>
            <person name="Orlando V."/>
            <person name="Pang K.C."/>
            <person name="Pavan W.J."/>
            <person name="Pavesi G."/>
            <person name="Pesole G."/>
            <person name="Petrovsky N."/>
            <person name="Piazza S."/>
            <person name="Reed J."/>
            <person name="Reid J.F."/>
            <person name="Ring B.Z."/>
            <person name="Ringwald M."/>
            <person name="Rost B."/>
            <person name="Ruan Y."/>
            <person name="Salzberg S.L."/>
            <person name="Sandelin A."/>
            <person name="Schneider C."/>
            <person name="Schoenbach C."/>
            <person name="Sekiguchi K."/>
            <person name="Semple C.A."/>
            <person name="Seno S."/>
            <person name="Sessa L."/>
            <person name="Sheng Y."/>
            <person name="Shibata Y."/>
            <person name="Shimada H."/>
            <person name="Shimada K."/>
            <person name="Silva D."/>
            <person name="Sinclair B."/>
            <person name="Sperling S."/>
            <person name="Stupka E."/>
            <person name="Sugiura K."/>
            <person name="Sultana R."/>
            <person name="Takenaka Y."/>
            <person name="Taki K."/>
            <person name="Tammoja K."/>
            <person name="Tan S.L."/>
            <person name="Tang S."/>
            <person name="Taylor M.S."/>
            <person name="Tegner J."/>
            <person name="Teichmann S.A."/>
            <person name="Ueda H.R."/>
            <person name="van Nimwegen E."/>
            <person name="Verardo R."/>
            <person name="Wei C.L."/>
            <person name="Yagi K."/>
            <person name="Yamanishi H."/>
            <person name="Zabarovsky E."/>
            <person name="Zhu S."/>
            <person name="Zimmer A."/>
            <person name="Hide W."/>
            <person name="Bult C."/>
            <person name="Grimmond S.M."/>
            <person name="Teasdale R.D."/>
            <person name="Liu E.T."/>
            <person name="Brusic V."/>
            <person name="Quackenbush J."/>
            <person name="Wahlestedt C."/>
            <person name="Mattick J.S."/>
            <person name="Hume D.A."/>
            <person name="Kai C."/>
            <person name="Sasaki D."/>
            <person name="Tomaru Y."/>
            <person name="Fukuda S."/>
            <person name="Kanamori-Katayama M."/>
            <person name="Suzuki M."/>
            <person name="Aoki J."/>
            <person name="Arakawa T."/>
            <person name="Iida J."/>
            <person name="Imamura K."/>
            <person name="Itoh M."/>
            <person name="Kato T."/>
            <person name="Kawaji H."/>
            <person name="Kawagashira N."/>
            <person name="Kawashima T."/>
            <person name="Kojima M."/>
            <person name="Kondo S."/>
            <person name="Konno H."/>
            <person name="Nakano K."/>
            <person name="Ninomiya N."/>
            <person name="Nishio T."/>
            <person name="Okada M."/>
            <person name="Plessy C."/>
            <person name="Shibata K."/>
            <person name="Shiraki T."/>
            <person name="Suzuki S."/>
            <person name="Tagami M."/>
            <person name="Waki K."/>
            <person name="Watahiki A."/>
            <person name="Okamura-Oho Y."/>
            <person name="Suzuki H."/>
            <person name="Kawai J."/>
            <person name="Hayashizaki Y."/>
        </authorList>
    </citation>
    <scope>NUCLEOTIDE SEQUENCE [LARGE SCALE MRNA]</scope>
    <source>
        <strain>C57BL/6J</strain>
    </source>
</reference>
<reference key="2">
    <citation type="submission" date="2009-01" db="UniProtKB">
        <authorList>
            <person name="Lubec G."/>
            <person name="Sunyer B."/>
            <person name="Chen W.-Q."/>
        </authorList>
    </citation>
    <scope>PROTEIN SEQUENCE OF 101-120 AND 174-189</scope>
    <scope>IDENTIFICATION BY MASS SPECTROMETRY</scope>
    <source>
        <strain>OF1</strain>
        <tissue>Hippocampus</tissue>
    </source>
</reference>
<reference key="3">
    <citation type="journal article" date="2008" name="J. Proteome Res.">
        <title>Large-scale identification and evolution indexing of tyrosine phosphorylation sites from murine brain.</title>
        <authorList>
            <person name="Ballif B.A."/>
            <person name="Carey G.R."/>
            <person name="Sunyaev S.R."/>
            <person name="Gygi S.P."/>
        </authorList>
    </citation>
    <scope>PHOSPHORYLATION [LARGE SCALE ANALYSIS] AT TYR-94</scope>
    <scope>IDENTIFICATION BY MASS SPECTROMETRY [LARGE SCALE ANALYSIS]</scope>
    <source>
        <tissue>Brain</tissue>
    </source>
</reference>
<reference key="4">
    <citation type="journal article" date="2010" name="Cell">
        <title>A tissue-specific atlas of mouse protein phosphorylation and expression.</title>
        <authorList>
            <person name="Huttlin E.L."/>
            <person name="Jedrychowski M.P."/>
            <person name="Elias J.E."/>
            <person name="Goswami T."/>
            <person name="Rad R."/>
            <person name="Beausoleil S.A."/>
            <person name="Villen J."/>
            <person name="Haas W."/>
            <person name="Sowa M.E."/>
            <person name="Gygi S.P."/>
        </authorList>
    </citation>
    <scope>IDENTIFICATION BY MASS SPECTROMETRY [LARGE SCALE ANALYSIS]</scope>
    <source>
        <tissue>Brain</tissue>
    </source>
</reference>
<keyword id="KW-0130">Cell adhesion</keyword>
<keyword id="KW-1003">Cell membrane</keyword>
<keyword id="KW-0903">Direct protein sequencing</keyword>
<keyword id="KW-1015">Disulfide bond</keyword>
<keyword id="KW-0325">Glycoprotein</keyword>
<keyword id="KW-0336">GPI-anchor</keyword>
<keyword id="KW-0393">Immunoglobulin domain</keyword>
<keyword id="KW-0449">Lipoprotein</keyword>
<keyword id="KW-0472">Membrane</keyword>
<keyword id="KW-0597">Phosphoprotein</keyword>
<keyword id="KW-1185">Reference proteome</keyword>
<keyword id="KW-0677">Repeat</keyword>
<keyword id="KW-0732">Signal</keyword>
<protein>
    <recommendedName>
        <fullName>Limbic system-associated membrane protein</fullName>
        <shortName>LSAMP</shortName>
    </recommendedName>
</protein>
<dbReference type="EMBL" id="AK044845">
    <property type="protein sequence ID" value="BAC32117.1"/>
    <property type="molecule type" value="mRNA"/>
</dbReference>
<dbReference type="RefSeq" id="NP_780757.1">
    <property type="nucleotide sequence ID" value="NM_175548.3"/>
</dbReference>
<dbReference type="SMR" id="Q8BLK3"/>
<dbReference type="BioGRID" id="234574">
    <property type="interactions" value="5"/>
</dbReference>
<dbReference type="FunCoup" id="Q8BLK3">
    <property type="interactions" value="584"/>
</dbReference>
<dbReference type="IntAct" id="Q8BLK3">
    <property type="interactions" value="2"/>
</dbReference>
<dbReference type="MINT" id="Q8BLK3"/>
<dbReference type="STRING" id="10090.ENSMUSP00000097349"/>
<dbReference type="GlyConnect" id="2480">
    <property type="glycosylation" value="4 N-Linked glycans (2 sites)"/>
</dbReference>
<dbReference type="GlyCosmos" id="Q8BLK3">
    <property type="glycosylation" value="7 sites, 4 glycans"/>
</dbReference>
<dbReference type="GlyGen" id="Q8BLK3">
    <property type="glycosylation" value="8 sites, 10 N-linked glycans (6 sites), 1 O-linked glycan (1 site)"/>
</dbReference>
<dbReference type="iPTMnet" id="Q8BLK3"/>
<dbReference type="PhosphoSitePlus" id="Q8BLK3"/>
<dbReference type="SwissPalm" id="Q8BLK3"/>
<dbReference type="PaxDb" id="10090-ENSMUSP00000077913"/>
<dbReference type="ProteomicsDB" id="293400"/>
<dbReference type="Antibodypedia" id="16507">
    <property type="antibodies" value="117 antibodies from 23 providers"/>
</dbReference>
<dbReference type="DNASU" id="268890"/>
<dbReference type="Ensembl" id="ENSMUST00000078873.11">
    <property type="protein sequence ID" value="ENSMUSP00000077913.5"/>
    <property type="gene ID" value="ENSMUSG00000061080.13"/>
</dbReference>
<dbReference type="UCSC" id="uc007zfs.1">
    <property type="organism name" value="mouse"/>
</dbReference>
<dbReference type="AGR" id="MGI:1261760"/>
<dbReference type="MGI" id="MGI:1261760">
    <property type="gene designation" value="Lsamp"/>
</dbReference>
<dbReference type="VEuPathDB" id="HostDB:ENSMUSG00000061080"/>
<dbReference type="eggNOG" id="KOG3510">
    <property type="taxonomic scope" value="Eukaryota"/>
</dbReference>
<dbReference type="GeneTree" id="ENSGT00940000158516"/>
<dbReference type="InParanoid" id="Q8BLK3"/>
<dbReference type="PhylomeDB" id="Q8BLK3"/>
<dbReference type="TreeFam" id="TF325565"/>
<dbReference type="Reactome" id="R-MMU-163125">
    <property type="pathway name" value="Post-translational modification: synthesis of GPI-anchored proteins"/>
</dbReference>
<dbReference type="BioGRID-ORCS" id="268890">
    <property type="hits" value="0 hits in 61 CRISPR screens"/>
</dbReference>
<dbReference type="CD-CODE" id="CE726F99">
    <property type="entry name" value="Postsynaptic density"/>
</dbReference>
<dbReference type="ChiTaRS" id="Lsamp">
    <property type="organism name" value="mouse"/>
</dbReference>
<dbReference type="PRO" id="PR:Q8BLK3"/>
<dbReference type="Proteomes" id="UP000000589">
    <property type="component" value="Chromosome 16"/>
</dbReference>
<dbReference type="RNAct" id="Q8BLK3">
    <property type="molecule type" value="protein"/>
</dbReference>
<dbReference type="Bgee" id="ENSMUSG00000061080">
    <property type="expression patterns" value="Expressed in dentate gyrus of hippocampal formation granule cell and 163 other cell types or tissues"/>
</dbReference>
<dbReference type="ExpressionAtlas" id="Q8BLK3">
    <property type="expression patterns" value="baseline and differential"/>
</dbReference>
<dbReference type="GO" id="GO:0005886">
    <property type="term" value="C:plasma membrane"/>
    <property type="evidence" value="ECO:0007669"/>
    <property type="project" value="UniProtKB-SubCell"/>
</dbReference>
<dbReference type="GO" id="GO:0098552">
    <property type="term" value="C:side of membrane"/>
    <property type="evidence" value="ECO:0007669"/>
    <property type="project" value="UniProtKB-KW"/>
</dbReference>
<dbReference type="GO" id="GO:0007155">
    <property type="term" value="P:cell adhesion"/>
    <property type="evidence" value="ECO:0007669"/>
    <property type="project" value="UniProtKB-KW"/>
</dbReference>
<dbReference type="GO" id="GO:0035641">
    <property type="term" value="P:locomotory exploration behavior"/>
    <property type="evidence" value="ECO:0000315"/>
    <property type="project" value="MGI"/>
</dbReference>
<dbReference type="CDD" id="cd00096">
    <property type="entry name" value="Ig"/>
    <property type="match status" value="1"/>
</dbReference>
<dbReference type="FunFam" id="2.60.40.10:FF:000013">
    <property type="entry name" value="cell adhesion molecule 1 isoform X1"/>
    <property type="match status" value="1"/>
</dbReference>
<dbReference type="FunFam" id="2.60.40.10:FF:000500">
    <property type="entry name" value="limbic system-associated membrane protein isoform X1"/>
    <property type="match status" value="1"/>
</dbReference>
<dbReference type="FunFam" id="2.60.40.10:FF:000113">
    <property type="entry name" value="Opioid-binding protein/cell adhesion molecule"/>
    <property type="match status" value="1"/>
</dbReference>
<dbReference type="Gene3D" id="2.60.40.10">
    <property type="entry name" value="Immunoglobulins"/>
    <property type="match status" value="3"/>
</dbReference>
<dbReference type="InterPro" id="IPR007110">
    <property type="entry name" value="Ig-like_dom"/>
</dbReference>
<dbReference type="InterPro" id="IPR036179">
    <property type="entry name" value="Ig-like_dom_sf"/>
</dbReference>
<dbReference type="InterPro" id="IPR013783">
    <property type="entry name" value="Ig-like_fold"/>
</dbReference>
<dbReference type="InterPro" id="IPR013098">
    <property type="entry name" value="Ig_I-set"/>
</dbReference>
<dbReference type="InterPro" id="IPR003599">
    <property type="entry name" value="Ig_sub"/>
</dbReference>
<dbReference type="InterPro" id="IPR003598">
    <property type="entry name" value="Ig_sub2"/>
</dbReference>
<dbReference type="InterPro" id="IPR050876">
    <property type="entry name" value="IgLON_domain"/>
</dbReference>
<dbReference type="PANTHER" id="PTHR42757">
    <property type="entry name" value="IGLON FAMILY OF IMMUNOGLOBULIN SUPERFAMILY-RELATED"/>
    <property type="match status" value="1"/>
</dbReference>
<dbReference type="PANTHER" id="PTHR42757:SF22">
    <property type="entry name" value="LIMBIC SYSTEM-ASSOCIATED MEMBRANE PROTEIN"/>
    <property type="match status" value="1"/>
</dbReference>
<dbReference type="Pfam" id="PF07679">
    <property type="entry name" value="I-set"/>
    <property type="match status" value="1"/>
</dbReference>
<dbReference type="Pfam" id="PF13927">
    <property type="entry name" value="Ig_3"/>
    <property type="match status" value="2"/>
</dbReference>
<dbReference type="SMART" id="SM00409">
    <property type="entry name" value="IG"/>
    <property type="match status" value="3"/>
</dbReference>
<dbReference type="SMART" id="SM00408">
    <property type="entry name" value="IGc2"/>
    <property type="match status" value="3"/>
</dbReference>
<dbReference type="SUPFAM" id="SSF48726">
    <property type="entry name" value="Immunoglobulin"/>
    <property type="match status" value="3"/>
</dbReference>
<dbReference type="PROSITE" id="PS50835">
    <property type="entry name" value="IG_LIKE"/>
    <property type="match status" value="3"/>
</dbReference>
<gene>
    <name type="primary">Lsamp</name>
</gene>
<evidence type="ECO:0000250" key="1"/>
<evidence type="ECO:0000255" key="2"/>
<evidence type="ECO:0000255" key="3">
    <source>
        <dbReference type="PROSITE-ProRule" id="PRU00114"/>
    </source>
</evidence>
<evidence type="ECO:0000305" key="4"/>
<evidence type="ECO:0007744" key="5">
    <source>
    </source>
</evidence>
<organism>
    <name type="scientific">Mus musculus</name>
    <name type="common">Mouse</name>
    <dbReference type="NCBI Taxonomy" id="10090"/>
    <lineage>
        <taxon>Eukaryota</taxon>
        <taxon>Metazoa</taxon>
        <taxon>Chordata</taxon>
        <taxon>Craniata</taxon>
        <taxon>Vertebrata</taxon>
        <taxon>Euteleostomi</taxon>
        <taxon>Mammalia</taxon>
        <taxon>Eutheria</taxon>
        <taxon>Euarchontoglires</taxon>
        <taxon>Glires</taxon>
        <taxon>Rodentia</taxon>
        <taxon>Myomorpha</taxon>
        <taxon>Muroidea</taxon>
        <taxon>Muridae</taxon>
        <taxon>Murinae</taxon>
        <taxon>Mus</taxon>
        <taxon>Mus</taxon>
    </lineage>
</organism>
<name>LSAMP_MOUSE</name>